<evidence type="ECO:0000250" key="1"/>
<evidence type="ECO:0000255" key="2">
    <source>
        <dbReference type="PROSITE-ProRule" id="PRU00686"/>
    </source>
</evidence>
<evidence type="ECO:0000269" key="3">
    <source>
    </source>
</evidence>
<evidence type="ECO:0000305" key="4"/>
<gene>
    <name type="primary">grx3</name>
    <name type="ORF">SPCC1450.06c</name>
</gene>
<name>GLRX3_SCHPO</name>
<proteinExistence type="inferred from homology"/>
<reference key="1">
    <citation type="submission" date="2003-07" db="EMBL/GenBank/DDBJ databases">
        <title>Characterization of Glutaredoxin 3 (Thioltransferase 3) from Schizosaccharomyces pombe.</title>
        <authorList>
            <person name="Moon J.-S."/>
            <person name="Kim H.-G."/>
            <person name="Lim H.-W."/>
            <person name="Lim C.-J."/>
        </authorList>
    </citation>
    <scope>NUCLEOTIDE SEQUENCE [GENOMIC DNA]</scope>
</reference>
<reference key="2">
    <citation type="journal article" date="2002" name="Nature">
        <title>The genome sequence of Schizosaccharomyces pombe.</title>
        <authorList>
            <person name="Wood V."/>
            <person name="Gwilliam R."/>
            <person name="Rajandream M.A."/>
            <person name="Lyne M.H."/>
            <person name="Lyne R."/>
            <person name="Stewart A."/>
            <person name="Sgouros J.G."/>
            <person name="Peat N."/>
            <person name="Hayles J."/>
            <person name="Baker S.G."/>
            <person name="Basham D."/>
            <person name="Bowman S."/>
            <person name="Brooks K."/>
            <person name="Brown D."/>
            <person name="Brown S."/>
            <person name="Chillingworth T."/>
            <person name="Churcher C.M."/>
            <person name="Collins M."/>
            <person name="Connor R."/>
            <person name="Cronin A."/>
            <person name="Davis P."/>
            <person name="Feltwell T."/>
            <person name="Fraser A."/>
            <person name="Gentles S."/>
            <person name="Goble A."/>
            <person name="Hamlin N."/>
            <person name="Harris D.E."/>
            <person name="Hidalgo J."/>
            <person name="Hodgson G."/>
            <person name="Holroyd S."/>
            <person name="Hornsby T."/>
            <person name="Howarth S."/>
            <person name="Huckle E.J."/>
            <person name="Hunt S."/>
            <person name="Jagels K."/>
            <person name="James K.D."/>
            <person name="Jones L."/>
            <person name="Jones M."/>
            <person name="Leather S."/>
            <person name="McDonald S."/>
            <person name="McLean J."/>
            <person name="Mooney P."/>
            <person name="Moule S."/>
            <person name="Mungall K.L."/>
            <person name="Murphy L.D."/>
            <person name="Niblett D."/>
            <person name="Odell C."/>
            <person name="Oliver K."/>
            <person name="O'Neil S."/>
            <person name="Pearson D."/>
            <person name="Quail M.A."/>
            <person name="Rabbinowitsch E."/>
            <person name="Rutherford K.M."/>
            <person name="Rutter S."/>
            <person name="Saunders D."/>
            <person name="Seeger K."/>
            <person name="Sharp S."/>
            <person name="Skelton J."/>
            <person name="Simmonds M.N."/>
            <person name="Squares R."/>
            <person name="Squares S."/>
            <person name="Stevens K."/>
            <person name="Taylor K."/>
            <person name="Taylor R.G."/>
            <person name="Tivey A."/>
            <person name="Walsh S.V."/>
            <person name="Warren T."/>
            <person name="Whitehead S."/>
            <person name="Woodward J.R."/>
            <person name="Volckaert G."/>
            <person name="Aert R."/>
            <person name="Robben J."/>
            <person name="Grymonprez B."/>
            <person name="Weltjens I."/>
            <person name="Vanstreels E."/>
            <person name="Rieger M."/>
            <person name="Schaefer M."/>
            <person name="Mueller-Auer S."/>
            <person name="Gabel C."/>
            <person name="Fuchs M."/>
            <person name="Duesterhoeft A."/>
            <person name="Fritzc C."/>
            <person name="Holzer E."/>
            <person name="Moestl D."/>
            <person name="Hilbert H."/>
            <person name="Borzym K."/>
            <person name="Langer I."/>
            <person name="Beck A."/>
            <person name="Lehrach H."/>
            <person name="Reinhardt R."/>
            <person name="Pohl T.M."/>
            <person name="Eger P."/>
            <person name="Zimmermann W."/>
            <person name="Wedler H."/>
            <person name="Wambutt R."/>
            <person name="Purnelle B."/>
            <person name="Goffeau A."/>
            <person name="Cadieu E."/>
            <person name="Dreano S."/>
            <person name="Gloux S."/>
            <person name="Lelaure V."/>
            <person name="Mottier S."/>
            <person name="Galibert F."/>
            <person name="Aves S.J."/>
            <person name="Xiang Z."/>
            <person name="Hunt C."/>
            <person name="Moore K."/>
            <person name="Hurst S.M."/>
            <person name="Lucas M."/>
            <person name="Rochet M."/>
            <person name="Gaillardin C."/>
            <person name="Tallada V.A."/>
            <person name="Garzon A."/>
            <person name="Thode G."/>
            <person name="Daga R.R."/>
            <person name="Cruzado L."/>
            <person name="Jimenez J."/>
            <person name="Sanchez M."/>
            <person name="del Rey F."/>
            <person name="Benito J."/>
            <person name="Dominguez A."/>
            <person name="Revuelta J.L."/>
            <person name="Moreno S."/>
            <person name="Armstrong J."/>
            <person name="Forsburg S.L."/>
            <person name="Cerutti L."/>
            <person name="Lowe T."/>
            <person name="McCombie W.R."/>
            <person name="Paulsen I."/>
            <person name="Potashkin J."/>
            <person name="Shpakovski G.V."/>
            <person name="Ussery D."/>
            <person name="Barrell B.G."/>
            <person name="Nurse P."/>
        </authorList>
    </citation>
    <scope>NUCLEOTIDE SEQUENCE [LARGE SCALE GENOMIC DNA]</scope>
    <source>
        <strain>972 / ATCC 24843</strain>
    </source>
</reference>
<reference key="3">
    <citation type="journal article" date="2000" name="Genes Cells">
        <title>Large-scale screening of intracellular protein localization in living fission yeast cells by the use of a GFP-fusion genomic DNA library.</title>
        <authorList>
            <person name="Ding D.-Q."/>
            <person name="Tomita Y."/>
            <person name="Yamamoto A."/>
            <person name="Chikashige Y."/>
            <person name="Haraguchi T."/>
            <person name="Hiraoka Y."/>
        </authorList>
    </citation>
    <scope>NUCLEOTIDE SEQUENCE [LARGE SCALE GENOMIC DNA] OF 1-136</scope>
    <scope>SUBCELLULAR LOCATION</scope>
    <source>
        <strain>ATCC 38364 / 968</strain>
    </source>
</reference>
<sequence>MANRKIFLITSLIISLLLIHIFIFSPLNEPEKNAKAGPLGLSDVSVPSAPKLPAKDSTDFEVFLENPVIIFSRPGCPYSAAAKKLLTETLRLDPPAVVVEVTDYEHTQELRDWLSSISDISTMPNIFVGGHSIGGSDSVRALYQEEKLQSTLDEWTHNKVLILPTD</sequence>
<accession>Q9Y7N3</accession>
<accession>Q76PC6</accession>
<accession>Q9UU55</accession>
<feature type="chain" id="PRO_0000102251" description="Monothiol glutaredoxin-3">
    <location>
        <begin position="1"/>
        <end position="166"/>
    </location>
</feature>
<feature type="domain" description="Glutaredoxin" evidence="2">
    <location>
        <begin position="56"/>
        <end position="159"/>
    </location>
</feature>
<feature type="binding site" evidence="1">
    <location>
        <position position="76"/>
    </location>
    <ligand>
        <name>[2Fe-2S] cluster</name>
        <dbReference type="ChEBI" id="CHEBI:190135"/>
        <note>ligand shared between dimeric partners</note>
    </ligand>
</feature>
<comment type="function">
    <text evidence="1">Monothiol glutaredoxin involved in the biogenesis of iron-sulfur clusters (By similarity). Binds one iron-sulfur cluster per dimer. The iron-sulfur cluster is bound between subunits, and is complexed by a bound glutathione and a cysteine residue from each subunit (By similarity).</text>
</comment>
<comment type="subunit">
    <text evidence="1">Homodimer.</text>
</comment>
<comment type="subcellular location">
    <subcellularLocation>
        <location evidence="3">Nucleus</location>
    </subcellularLocation>
</comment>
<comment type="similarity">
    <text evidence="4">Belongs to the glutaredoxin family. Monothiol subfamily.</text>
</comment>
<organism>
    <name type="scientific">Schizosaccharomyces pombe (strain 972 / ATCC 24843)</name>
    <name type="common">Fission yeast</name>
    <dbReference type="NCBI Taxonomy" id="284812"/>
    <lineage>
        <taxon>Eukaryota</taxon>
        <taxon>Fungi</taxon>
        <taxon>Dikarya</taxon>
        <taxon>Ascomycota</taxon>
        <taxon>Taphrinomycotina</taxon>
        <taxon>Schizosaccharomycetes</taxon>
        <taxon>Schizosaccharomycetales</taxon>
        <taxon>Schizosaccharomycetaceae</taxon>
        <taxon>Schizosaccharomyces</taxon>
    </lineage>
</organism>
<protein>
    <recommendedName>
        <fullName>Monothiol glutaredoxin-3</fullName>
    </recommendedName>
</protein>
<dbReference type="EMBL" id="AY350733">
    <property type="protein sequence ID" value="AAQ56717.1"/>
    <property type="molecule type" value="Genomic_DNA"/>
</dbReference>
<dbReference type="EMBL" id="CU329672">
    <property type="protein sequence ID" value="CAB40173.1"/>
    <property type="molecule type" value="Genomic_DNA"/>
</dbReference>
<dbReference type="EMBL" id="AB027803">
    <property type="protein sequence ID" value="BAA87107.1"/>
    <property type="molecule type" value="Genomic_DNA"/>
</dbReference>
<dbReference type="PIR" id="T40988">
    <property type="entry name" value="T40988"/>
</dbReference>
<dbReference type="RefSeq" id="NP_588305.1">
    <property type="nucleotide sequence ID" value="NM_001023295.2"/>
</dbReference>
<dbReference type="SMR" id="Q9Y7N3"/>
<dbReference type="BioGRID" id="275574">
    <property type="interactions" value="32"/>
</dbReference>
<dbReference type="FunCoup" id="Q9Y7N3">
    <property type="interactions" value="4"/>
</dbReference>
<dbReference type="STRING" id="284812.Q9Y7N3"/>
<dbReference type="SwissPalm" id="Q9Y7N3"/>
<dbReference type="PaxDb" id="4896-SPCC1450.06c.1"/>
<dbReference type="EnsemblFungi" id="SPCC1450.06c.1">
    <property type="protein sequence ID" value="SPCC1450.06c.1:pep"/>
    <property type="gene ID" value="SPCC1450.06c"/>
</dbReference>
<dbReference type="GeneID" id="2539000"/>
<dbReference type="KEGG" id="spo:2539000"/>
<dbReference type="PomBase" id="SPCC1450.06c">
    <property type="gene designation" value="grx3"/>
</dbReference>
<dbReference type="VEuPathDB" id="FungiDB:SPCC1450.06c"/>
<dbReference type="eggNOG" id="KOG1752">
    <property type="taxonomic scope" value="Eukaryota"/>
</dbReference>
<dbReference type="HOGENOM" id="CLU_136365_0_0_1"/>
<dbReference type="InParanoid" id="Q9Y7N3"/>
<dbReference type="OMA" id="GELDRWT"/>
<dbReference type="PhylomeDB" id="Q9Y7N3"/>
<dbReference type="PRO" id="PR:Q9Y7N3"/>
<dbReference type="Proteomes" id="UP000002485">
    <property type="component" value="Chromosome III"/>
</dbReference>
<dbReference type="GO" id="GO:0005801">
    <property type="term" value="C:cis-Golgi network"/>
    <property type="evidence" value="ECO:0000318"/>
    <property type="project" value="GO_Central"/>
</dbReference>
<dbReference type="GO" id="GO:0005737">
    <property type="term" value="C:cytoplasm"/>
    <property type="evidence" value="ECO:0000318"/>
    <property type="project" value="GO_Central"/>
</dbReference>
<dbReference type="GO" id="GO:0005783">
    <property type="term" value="C:endoplasmic reticulum"/>
    <property type="evidence" value="ECO:0007005"/>
    <property type="project" value="PomBase"/>
</dbReference>
<dbReference type="GO" id="GO:0000324">
    <property type="term" value="C:fungal-type vacuole"/>
    <property type="evidence" value="ECO:0000318"/>
    <property type="project" value="GO_Central"/>
</dbReference>
<dbReference type="GO" id="GO:0005794">
    <property type="term" value="C:Golgi apparatus"/>
    <property type="evidence" value="ECO:0007005"/>
    <property type="project" value="PomBase"/>
</dbReference>
<dbReference type="GO" id="GO:0005796">
    <property type="term" value="C:Golgi lumen"/>
    <property type="evidence" value="ECO:0000318"/>
    <property type="project" value="GO_Central"/>
</dbReference>
<dbReference type="GO" id="GO:0042175">
    <property type="term" value="C:nuclear outer membrane-endoplasmic reticulum membrane network"/>
    <property type="evidence" value="ECO:0000314"/>
    <property type="project" value="PomBase"/>
</dbReference>
<dbReference type="GO" id="GO:0034399">
    <property type="term" value="C:nuclear periphery"/>
    <property type="evidence" value="ECO:0000314"/>
    <property type="project" value="PomBase"/>
</dbReference>
<dbReference type="GO" id="GO:0051537">
    <property type="term" value="F:2 iron, 2 sulfur cluster binding"/>
    <property type="evidence" value="ECO:0007669"/>
    <property type="project" value="UniProtKB-KW"/>
</dbReference>
<dbReference type="GO" id="GO:0015038">
    <property type="term" value="F:glutathione disulfide oxidoreductase activity"/>
    <property type="evidence" value="ECO:0000315"/>
    <property type="project" value="PomBase"/>
</dbReference>
<dbReference type="GO" id="GO:0046872">
    <property type="term" value="F:metal ion binding"/>
    <property type="evidence" value="ECO:0007669"/>
    <property type="project" value="UniProtKB-KW"/>
</dbReference>
<dbReference type="GO" id="GO:0034599">
    <property type="term" value="P:cellular response to oxidative stress"/>
    <property type="evidence" value="ECO:0000318"/>
    <property type="project" value="GO_Central"/>
</dbReference>
<dbReference type="CDD" id="cd03419">
    <property type="entry name" value="GRX_GRXh_1_2_like"/>
    <property type="match status" value="1"/>
</dbReference>
<dbReference type="Gene3D" id="3.40.30.10">
    <property type="entry name" value="Glutaredoxin"/>
    <property type="match status" value="1"/>
</dbReference>
<dbReference type="InterPro" id="IPR002109">
    <property type="entry name" value="Glutaredoxin"/>
</dbReference>
<dbReference type="InterPro" id="IPR011899">
    <property type="entry name" value="Glutaredoxin_euk/vir"/>
</dbReference>
<dbReference type="InterPro" id="IPR014025">
    <property type="entry name" value="Glutaredoxin_subgr"/>
</dbReference>
<dbReference type="InterPro" id="IPR036249">
    <property type="entry name" value="Thioredoxin-like_sf"/>
</dbReference>
<dbReference type="NCBIfam" id="TIGR02180">
    <property type="entry name" value="GRX_euk"/>
    <property type="match status" value="1"/>
</dbReference>
<dbReference type="PANTHER" id="PTHR45694">
    <property type="entry name" value="GLUTAREDOXIN 2"/>
    <property type="match status" value="1"/>
</dbReference>
<dbReference type="PANTHER" id="PTHR45694:SF5">
    <property type="entry name" value="GLUTAREDOXIN 2"/>
    <property type="match status" value="1"/>
</dbReference>
<dbReference type="Pfam" id="PF00462">
    <property type="entry name" value="Glutaredoxin"/>
    <property type="match status" value="1"/>
</dbReference>
<dbReference type="PRINTS" id="PR00160">
    <property type="entry name" value="GLUTAREDOXIN"/>
</dbReference>
<dbReference type="SUPFAM" id="SSF52833">
    <property type="entry name" value="Thioredoxin-like"/>
    <property type="match status" value="1"/>
</dbReference>
<dbReference type="PROSITE" id="PS51354">
    <property type="entry name" value="GLUTAREDOXIN_2"/>
    <property type="match status" value="1"/>
</dbReference>
<keyword id="KW-0001">2Fe-2S</keyword>
<keyword id="KW-0408">Iron</keyword>
<keyword id="KW-0411">Iron-sulfur</keyword>
<keyword id="KW-0479">Metal-binding</keyword>
<keyword id="KW-0539">Nucleus</keyword>
<keyword id="KW-0676">Redox-active center</keyword>
<keyword id="KW-1185">Reference proteome</keyword>